<protein>
    <recommendedName>
        <fullName>3-dehydroquinate dehydratase</fullName>
        <shortName>3-dehydroquinase</shortName>
        <ecNumber>4.2.1.10</ecNumber>
    </recommendedName>
    <alternativeName>
        <fullName>Type II DHQase</fullName>
    </alternativeName>
</protein>
<proteinExistence type="evidence at protein level"/>
<accession>P54517</accession>
<evidence type="ECO:0000250" key="1"/>
<evidence type="ECO:0000269" key="2">
    <source ref="3"/>
</evidence>
<evidence type="ECO:0000305" key="3"/>
<evidence type="ECO:0007829" key="4">
    <source>
        <dbReference type="PDB" id="1GQO"/>
    </source>
</evidence>
<feature type="chain" id="PRO_0000159872" description="3-dehydroquinate dehydratase">
    <location>
        <begin position="1"/>
        <end position="148"/>
    </location>
</feature>
<feature type="active site" description="Proton donor" evidence="1">
    <location>
        <position position="100"/>
    </location>
</feature>
<feature type="binding site" evidence="1">
    <location>
        <position position="74"/>
    </location>
    <ligand>
        <name>substrate</name>
    </ligand>
</feature>
<feature type="binding site" evidence="1">
    <location>
        <position position="80"/>
    </location>
    <ligand>
        <name>substrate</name>
    </ligand>
</feature>
<feature type="binding site" evidence="1">
    <location>
        <position position="87"/>
    </location>
    <ligand>
        <name>substrate</name>
    </ligand>
</feature>
<feature type="binding site" evidence="1">
    <location>
        <begin position="101"/>
        <end position="102"/>
    </location>
    <ligand>
        <name>substrate</name>
    </ligand>
</feature>
<feature type="binding site" evidence="1">
    <location>
        <position position="111"/>
    </location>
    <ligand>
        <name>substrate</name>
    </ligand>
</feature>
<feature type="site" description="Transition state stabilizer" evidence="1">
    <location>
        <position position="18"/>
    </location>
</feature>
<feature type="strand" evidence="4">
    <location>
        <begin position="3"/>
        <end position="8"/>
    </location>
</feature>
<feature type="helix" evidence="4">
    <location>
        <begin position="12"/>
        <end position="14"/>
    </location>
</feature>
<feature type="helix" evidence="4">
    <location>
        <begin position="20"/>
        <end position="23"/>
    </location>
</feature>
<feature type="helix" evidence="4">
    <location>
        <begin position="28"/>
        <end position="42"/>
    </location>
</feature>
<feature type="strand" evidence="4">
    <location>
        <begin position="45"/>
        <end position="50"/>
    </location>
</feature>
<feature type="helix" evidence="4">
    <location>
        <begin position="54"/>
        <end position="64"/>
    </location>
</feature>
<feature type="turn" evidence="4">
    <location>
        <begin position="65"/>
        <end position="67"/>
    </location>
</feature>
<feature type="strand" evidence="4">
    <location>
        <begin position="69"/>
        <end position="74"/>
    </location>
</feature>
<feature type="helix" evidence="4">
    <location>
        <begin position="76"/>
        <end position="80"/>
    </location>
</feature>
<feature type="helix" evidence="4">
    <location>
        <begin position="83"/>
        <end position="90"/>
    </location>
</feature>
<feature type="strand" evidence="4">
    <location>
        <begin position="96"/>
        <end position="102"/>
    </location>
</feature>
<feature type="helix" evidence="4">
    <location>
        <begin position="104"/>
        <end position="106"/>
    </location>
</feature>
<feature type="helix" evidence="4">
    <location>
        <begin position="109"/>
        <end position="112"/>
    </location>
</feature>
<feature type="helix" evidence="4">
    <location>
        <begin position="117"/>
        <end position="119"/>
    </location>
</feature>
<feature type="strand" evidence="4">
    <location>
        <begin position="120"/>
        <end position="127"/>
    </location>
</feature>
<feature type="helix" evidence="4">
    <location>
        <begin position="130"/>
        <end position="140"/>
    </location>
</feature>
<sequence length="148" mass="16431">MPHFLILNGPNVNRLGSREPEVFGRQTLTDIETDLFQFAEALHIQLTFFQSNHEGDLIDAIHEAEEQYSGIVLNPGALSHYSYAIRDAVSSISLPVVEVHLSNLYAREEFRHQSVIAPVAKGQIVGLGAEGYKLAVRYLLSQQGGESR</sequence>
<keyword id="KW-0002">3D-structure</keyword>
<keyword id="KW-0028">Amino-acid biosynthesis</keyword>
<keyword id="KW-0057">Aromatic amino acid biosynthesis</keyword>
<keyword id="KW-0456">Lyase</keyword>
<keyword id="KW-1185">Reference proteome</keyword>
<comment type="catalytic activity">
    <reaction>
        <text>3-dehydroquinate = 3-dehydroshikimate + H2O</text>
        <dbReference type="Rhea" id="RHEA:21096"/>
        <dbReference type="ChEBI" id="CHEBI:15377"/>
        <dbReference type="ChEBI" id="CHEBI:16630"/>
        <dbReference type="ChEBI" id="CHEBI:32364"/>
        <dbReference type="EC" id="4.2.1.10"/>
    </reaction>
</comment>
<comment type="pathway">
    <text>Metabolic intermediate biosynthesis; chorismate biosynthesis; chorismate from D-erythrose 4-phosphate and phosphoenolpyruvate: step 3/7.</text>
</comment>
<comment type="subunit">
    <text evidence="2">Homododecamer.</text>
</comment>
<comment type="similarity">
    <text evidence="3">Belongs to the type-II 3-dehydroquinase family.</text>
</comment>
<comment type="caution">
    <text evidence="3">Phe-23 is present instead of the conserved Tyr which is expected to be an active site residue.</text>
</comment>
<gene>
    <name type="primary">yqhS</name>
    <name type="ordered locus">BSU24470</name>
</gene>
<name>AROQ_BACSU</name>
<dbReference type="EC" id="4.2.1.10"/>
<dbReference type="EMBL" id="D84432">
    <property type="protein sequence ID" value="BAA12556.1"/>
    <property type="molecule type" value="Genomic_DNA"/>
</dbReference>
<dbReference type="EMBL" id="AL009126">
    <property type="protein sequence ID" value="CAB14378.1"/>
    <property type="molecule type" value="Genomic_DNA"/>
</dbReference>
<dbReference type="PIR" id="B69960">
    <property type="entry name" value="B69960"/>
</dbReference>
<dbReference type="RefSeq" id="NP_390327.1">
    <property type="nucleotide sequence ID" value="NC_000964.3"/>
</dbReference>
<dbReference type="PDB" id="1GQO">
    <property type="method" value="X-ray"/>
    <property type="resolution" value="2.10 A"/>
    <property type="chains" value="A/B/C/D/E/F/G/H/I/J/K/L/M/N/O/P/Q/R/S/T/U/V/X/Y=2-144"/>
</dbReference>
<dbReference type="PDBsum" id="1GQO"/>
<dbReference type="SMR" id="P54517"/>
<dbReference type="FunCoup" id="P54517">
    <property type="interactions" value="244"/>
</dbReference>
<dbReference type="STRING" id="224308.BSU24470"/>
<dbReference type="PaxDb" id="224308-BSU24470"/>
<dbReference type="EnsemblBacteria" id="CAB14378">
    <property type="protein sequence ID" value="CAB14378"/>
    <property type="gene ID" value="BSU_24470"/>
</dbReference>
<dbReference type="GeneID" id="938557"/>
<dbReference type="KEGG" id="bsu:BSU24470"/>
<dbReference type="PATRIC" id="fig|224308.179.peg.2665"/>
<dbReference type="eggNOG" id="COG0757">
    <property type="taxonomic scope" value="Bacteria"/>
</dbReference>
<dbReference type="InParanoid" id="P54517"/>
<dbReference type="OrthoDB" id="9790793at2"/>
<dbReference type="PhylomeDB" id="P54517"/>
<dbReference type="BioCyc" id="BSUB:BSU24470-MONOMER"/>
<dbReference type="BRENDA" id="4.2.1.10">
    <property type="organism ID" value="658"/>
</dbReference>
<dbReference type="UniPathway" id="UPA00053">
    <property type="reaction ID" value="UER00086"/>
</dbReference>
<dbReference type="EvolutionaryTrace" id="P54517"/>
<dbReference type="Proteomes" id="UP000001570">
    <property type="component" value="Chromosome"/>
</dbReference>
<dbReference type="GO" id="GO:0003855">
    <property type="term" value="F:3-dehydroquinate dehydratase activity"/>
    <property type="evidence" value="ECO:0000318"/>
    <property type="project" value="GO_Central"/>
</dbReference>
<dbReference type="GO" id="GO:0008652">
    <property type="term" value="P:amino acid biosynthetic process"/>
    <property type="evidence" value="ECO:0007669"/>
    <property type="project" value="UniProtKB-KW"/>
</dbReference>
<dbReference type="GO" id="GO:0009073">
    <property type="term" value="P:aromatic amino acid family biosynthetic process"/>
    <property type="evidence" value="ECO:0007669"/>
    <property type="project" value="UniProtKB-KW"/>
</dbReference>
<dbReference type="GO" id="GO:0009423">
    <property type="term" value="P:chorismate biosynthetic process"/>
    <property type="evidence" value="ECO:0007669"/>
    <property type="project" value="UniProtKB-UniRule"/>
</dbReference>
<dbReference type="GO" id="GO:0019631">
    <property type="term" value="P:quinate catabolic process"/>
    <property type="evidence" value="ECO:0000318"/>
    <property type="project" value="GO_Central"/>
</dbReference>
<dbReference type="CDD" id="cd00466">
    <property type="entry name" value="DHQase_II"/>
    <property type="match status" value="1"/>
</dbReference>
<dbReference type="Gene3D" id="3.40.50.9100">
    <property type="entry name" value="Dehydroquinase, class II"/>
    <property type="match status" value="1"/>
</dbReference>
<dbReference type="HAMAP" id="MF_00169">
    <property type="entry name" value="AroQ"/>
    <property type="match status" value="1"/>
</dbReference>
<dbReference type="InterPro" id="IPR001874">
    <property type="entry name" value="DHquinase_II"/>
</dbReference>
<dbReference type="InterPro" id="IPR018509">
    <property type="entry name" value="DHquinase_II_CS"/>
</dbReference>
<dbReference type="InterPro" id="IPR036441">
    <property type="entry name" value="DHquinase_II_sf"/>
</dbReference>
<dbReference type="NCBIfam" id="TIGR01088">
    <property type="entry name" value="aroQ"/>
    <property type="match status" value="1"/>
</dbReference>
<dbReference type="NCBIfam" id="NF003805">
    <property type="entry name" value="PRK05395.1-2"/>
    <property type="match status" value="1"/>
</dbReference>
<dbReference type="NCBIfam" id="NF003806">
    <property type="entry name" value="PRK05395.1-3"/>
    <property type="match status" value="1"/>
</dbReference>
<dbReference type="NCBIfam" id="NF003807">
    <property type="entry name" value="PRK05395.1-4"/>
    <property type="match status" value="1"/>
</dbReference>
<dbReference type="PANTHER" id="PTHR21272">
    <property type="entry name" value="CATABOLIC 3-DEHYDROQUINASE"/>
    <property type="match status" value="1"/>
</dbReference>
<dbReference type="PANTHER" id="PTHR21272:SF3">
    <property type="entry name" value="CATABOLIC 3-DEHYDROQUINASE"/>
    <property type="match status" value="1"/>
</dbReference>
<dbReference type="Pfam" id="PF01220">
    <property type="entry name" value="DHquinase_II"/>
    <property type="match status" value="1"/>
</dbReference>
<dbReference type="PIRSF" id="PIRSF001399">
    <property type="entry name" value="DHquinase_II"/>
    <property type="match status" value="1"/>
</dbReference>
<dbReference type="SUPFAM" id="SSF52304">
    <property type="entry name" value="Type II 3-dehydroquinate dehydratase"/>
    <property type="match status" value="1"/>
</dbReference>
<dbReference type="PROSITE" id="PS01029">
    <property type="entry name" value="DEHYDROQUINASE_II"/>
    <property type="match status" value="1"/>
</dbReference>
<reference key="1">
    <citation type="journal article" date="1996" name="Microbiology">
        <title>Systematic sequencing of the 283 kb 210 degrees-232 degrees region of the Bacillus subtilis genome containing the skin element and many sporulation genes.</title>
        <authorList>
            <person name="Mizuno M."/>
            <person name="Masuda S."/>
            <person name="Takemaru K."/>
            <person name="Hosono S."/>
            <person name="Sato T."/>
            <person name="Takeuchi M."/>
            <person name="Kobayashi Y."/>
        </authorList>
    </citation>
    <scope>NUCLEOTIDE SEQUENCE [GENOMIC DNA]</scope>
    <source>
        <strain>168 / JH642</strain>
    </source>
</reference>
<reference key="2">
    <citation type="journal article" date="1997" name="Nature">
        <title>The complete genome sequence of the Gram-positive bacterium Bacillus subtilis.</title>
        <authorList>
            <person name="Kunst F."/>
            <person name="Ogasawara N."/>
            <person name="Moszer I."/>
            <person name="Albertini A.M."/>
            <person name="Alloni G."/>
            <person name="Azevedo V."/>
            <person name="Bertero M.G."/>
            <person name="Bessieres P."/>
            <person name="Bolotin A."/>
            <person name="Borchert S."/>
            <person name="Borriss R."/>
            <person name="Boursier L."/>
            <person name="Brans A."/>
            <person name="Braun M."/>
            <person name="Brignell S.C."/>
            <person name="Bron S."/>
            <person name="Brouillet S."/>
            <person name="Bruschi C.V."/>
            <person name="Caldwell B."/>
            <person name="Capuano V."/>
            <person name="Carter N.M."/>
            <person name="Choi S.-K."/>
            <person name="Codani J.-J."/>
            <person name="Connerton I.F."/>
            <person name="Cummings N.J."/>
            <person name="Daniel R.A."/>
            <person name="Denizot F."/>
            <person name="Devine K.M."/>
            <person name="Duesterhoeft A."/>
            <person name="Ehrlich S.D."/>
            <person name="Emmerson P.T."/>
            <person name="Entian K.-D."/>
            <person name="Errington J."/>
            <person name="Fabret C."/>
            <person name="Ferrari E."/>
            <person name="Foulger D."/>
            <person name="Fritz C."/>
            <person name="Fujita M."/>
            <person name="Fujita Y."/>
            <person name="Fuma S."/>
            <person name="Galizzi A."/>
            <person name="Galleron N."/>
            <person name="Ghim S.-Y."/>
            <person name="Glaser P."/>
            <person name="Goffeau A."/>
            <person name="Golightly E.J."/>
            <person name="Grandi G."/>
            <person name="Guiseppi G."/>
            <person name="Guy B.J."/>
            <person name="Haga K."/>
            <person name="Haiech J."/>
            <person name="Harwood C.R."/>
            <person name="Henaut A."/>
            <person name="Hilbert H."/>
            <person name="Holsappel S."/>
            <person name="Hosono S."/>
            <person name="Hullo M.-F."/>
            <person name="Itaya M."/>
            <person name="Jones L.-M."/>
            <person name="Joris B."/>
            <person name="Karamata D."/>
            <person name="Kasahara Y."/>
            <person name="Klaerr-Blanchard M."/>
            <person name="Klein C."/>
            <person name="Kobayashi Y."/>
            <person name="Koetter P."/>
            <person name="Koningstein G."/>
            <person name="Krogh S."/>
            <person name="Kumano M."/>
            <person name="Kurita K."/>
            <person name="Lapidus A."/>
            <person name="Lardinois S."/>
            <person name="Lauber J."/>
            <person name="Lazarevic V."/>
            <person name="Lee S.-M."/>
            <person name="Levine A."/>
            <person name="Liu H."/>
            <person name="Masuda S."/>
            <person name="Mauel C."/>
            <person name="Medigue C."/>
            <person name="Medina N."/>
            <person name="Mellado R.P."/>
            <person name="Mizuno M."/>
            <person name="Moestl D."/>
            <person name="Nakai S."/>
            <person name="Noback M."/>
            <person name="Noone D."/>
            <person name="O'Reilly M."/>
            <person name="Ogawa K."/>
            <person name="Ogiwara A."/>
            <person name="Oudega B."/>
            <person name="Park S.-H."/>
            <person name="Parro V."/>
            <person name="Pohl T.M."/>
            <person name="Portetelle D."/>
            <person name="Porwollik S."/>
            <person name="Prescott A.M."/>
            <person name="Presecan E."/>
            <person name="Pujic P."/>
            <person name="Purnelle B."/>
            <person name="Rapoport G."/>
            <person name="Rey M."/>
            <person name="Reynolds S."/>
            <person name="Rieger M."/>
            <person name="Rivolta C."/>
            <person name="Rocha E."/>
            <person name="Roche B."/>
            <person name="Rose M."/>
            <person name="Sadaie Y."/>
            <person name="Sato T."/>
            <person name="Scanlan E."/>
            <person name="Schleich S."/>
            <person name="Schroeter R."/>
            <person name="Scoffone F."/>
            <person name="Sekiguchi J."/>
            <person name="Sekowska A."/>
            <person name="Seror S.J."/>
            <person name="Serror P."/>
            <person name="Shin B.-S."/>
            <person name="Soldo B."/>
            <person name="Sorokin A."/>
            <person name="Tacconi E."/>
            <person name="Takagi T."/>
            <person name="Takahashi H."/>
            <person name="Takemaru K."/>
            <person name="Takeuchi M."/>
            <person name="Tamakoshi A."/>
            <person name="Tanaka T."/>
            <person name="Terpstra P."/>
            <person name="Tognoni A."/>
            <person name="Tosato V."/>
            <person name="Uchiyama S."/>
            <person name="Vandenbol M."/>
            <person name="Vannier F."/>
            <person name="Vassarotti A."/>
            <person name="Viari A."/>
            <person name="Wambutt R."/>
            <person name="Wedler E."/>
            <person name="Wedler H."/>
            <person name="Weitzenegger T."/>
            <person name="Winters P."/>
            <person name="Wipat A."/>
            <person name="Yamamoto H."/>
            <person name="Yamane K."/>
            <person name="Yasumoto K."/>
            <person name="Yata K."/>
            <person name="Yoshida K."/>
            <person name="Yoshikawa H.-F."/>
            <person name="Zumstein E."/>
            <person name="Yoshikawa H."/>
            <person name="Danchin A."/>
        </authorList>
    </citation>
    <scope>NUCLEOTIDE SEQUENCE [LARGE SCALE GENOMIC DNA]</scope>
    <source>
        <strain>168</strain>
    </source>
</reference>
<reference key="3">
    <citation type="submission" date="2001-11" db="PDB data bank">
        <title>Crystal structure of the type II dehydroquinase from Bacillus subtilis.</title>
        <authorList>
            <person name="Robinson D.A."/>
            <person name="Roszak A.W."/>
            <person name="Coggins J.R."/>
            <person name="Lapthorn A.J."/>
        </authorList>
    </citation>
    <scope>X-RAY CRYSTALLOGRAPHY (2.1 ANGSTROMS) OF 2-144</scope>
    <scope>SUBUNIT</scope>
</reference>
<organism>
    <name type="scientific">Bacillus subtilis (strain 168)</name>
    <dbReference type="NCBI Taxonomy" id="224308"/>
    <lineage>
        <taxon>Bacteria</taxon>
        <taxon>Bacillati</taxon>
        <taxon>Bacillota</taxon>
        <taxon>Bacilli</taxon>
        <taxon>Bacillales</taxon>
        <taxon>Bacillaceae</taxon>
        <taxon>Bacillus</taxon>
    </lineage>
</organism>